<protein>
    <recommendedName>
        <fullName>Methane monooxygenase component A alpha chain</fullName>
        <ecNumber>1.14.13.25</ecNumber>
    </recommendedName>
    <alternativeName>
        <fullName>Methane hydroxylase</fullName>
    </alternativeName>
</protein>
<gene>
    <name type="primary">mmoX</name>
</gene>
<reference key="1">
    <citation type="journal article" date="1991" name="Mol. Microbiol.">
        <title>Molecular analysis of the methane monooxygenase (MMO) gene cluster of Methylosinus trichosporium OB3b.</title>
        <authorList>
            <person name="Cardy D.L.N."/>
            <person name="Laidler V."/>
            <person name="Salmond G.P.C."/>
            <person name="Murrell J.C."/>
        </authorList>
    </citation>
    <scope>NUCLEOTIDE SEQUENCE [GENOMIC DNA]</scope>
    <source>
        <strain>ATCC 35070 / NCIMB 11131 / ACM 3311 / OB3b</strain>
    </source>
</reference>
<reference key="2">
    <citation type="submission" date="1999-06" db="EMBL/GenBank/DDBJ databases">
        <authorList>
            <person name="McDonald I."/>
        </authorList>
    </citation>
    <scope>SEQUENCE REVISION</scope>
</reference>
<reference key="3">
    <citation type="journal article" date="1991" name="J. Biol. Chem.">
        <title>Complex formation between the protein components of methane monooxygenase from Methylosinus trichosporium OB3b. Identification of sites of component interaction.</title>
        <authorList>
            <person name="Fox B.G."/>
            <person name="Liu Y."/>
            <person name="Dege J.E."/>
            <person name="Lipscomb J.D."/>
        </authorList>
    </citation>
    <scope>PROTEIN SEQUENCE OF 2-16</scope>
</reference>
<keyword id="KW-0002">3D-structure</keyword>
<keyword id="KW-0903">Direct protein sequencing</keyword>
<keyword id="KW-0408">Iron</keyword>
<keyword id="KW-0479">Metal-binding</keyword>
<keyword id="KW-0503">Monooxygenase</keyword>
<keyword id="KW-0521">NADP</keyword>
<keyword id="KW-0554">One-carbon metabolism</keyword>
<keyword id="KW-0560">Oxidoreductase</keyword>
<comment type="function">
    <text>Responsible for the initial oxygenation of methane to methanol in methanotrophs. It also catalyzes the monohydroxylation of a variety of unactivated alkenes, alicyclic, aromatic and heterocyclic compounds.</text>
</comment>
<comment type="catalytic activity">
    <reaction>
        <text>methane + NADH + O2 + H(+) = methanol + NAD(+) + H2O</text>
        <dbReference type="Rhea" id="RHEA:13637"/>
        <dbReference type="ChEBI" id="CHEBI:15377"/>
        <dbReference type="ChEBI" id="CHEBI:15378"/>
        <dbReference type="ChEBI" id="CHEBI:15379"/>
        <dbReference type="ChEBI" id="CHEBI:16183"/>
        <dbReference type="ChEBI" id="CHEBI:17790"/>
        <dbReference type="ChEBI" id="CHEBI:57540"/>
        <dbReference type="ChEBI" id="CHEBI:57945"/>
        <dbReference type="EC" id="1.14.13.25"/>
    </reaction>
</comment>
<comment type="catalytic activity">
    <reaction>
        <text>methane + NADPH + O2 + H(+) = methanol + NADP(+) + H2O</text>
        <dbReference type="Rhea" id="RHEA:13641"/>
        <dbReference type="ChEBI" id="CHEBI:15377"/>
        <dbReference type="ChEBI" id="CHEBI:15378"/>
        <dbReference type="ChEBI" id="CHEBI:15379"/>
        <dbReference type="ChEBI" id="CHEBI:16183"/>
        <dbReference type="ChEBI" id="CHEBI:17790"/>
        <dbReference type="ChEBI" id="CHEBI:57783"/>
        <dbReference type="ChEBI" id="CHEBI:58349"/>
        <dbReference type="EC" id="1.14.13.25"/>
    </reaction>
</comment>
<comment type="cofactor">
    <cofactor>
        <name>Fe cation</name>
        <dbReference type="ChEBI" id="CHEBI:24875"/>
    </cofactor>
    <text>Binds 2 iron ions.</text>
</comment>
<comment type="subunit">
    <text>M.trichosporium has two forms of methane monooxygenase, a soluble and a membrane-bound type. The soluble type consists of four components (A to D): protein A, comprising three chains, in an alpha-2, beta-2, gamma-2 configuration, is a nonheme iron protein containing an unusual mu-hydroxo bridge structure at its active site and interacts with both oxygen and methane.</text>
</comment>
<comment type="similarity">
    <text evidence="4">Belongs to the TmoA/XamoA family.</text>
</comment>
<name>MEMA_METTR</name>
<accession>P27353</accession>
<proteinExistence type="evidence at protein level"/>
<feature type="initiator methionine" description="Removed" evidence="3">
    <location>
        <position position="1"/>
    </location>
</feature>
<feature type="chain" id="PRO_0000096406" description="Methane monooxygenase component A alpha chain">
    <location>
        <begin position="2"/>
        <end position="526"/>
    </location>
</feature>
<feature type="active site" evidence="2">
    <location>
        <position position="151"/>
    </location>
</feature>
<feature type="binding site" evidence="1">
    <location>
        <position position="114"/>
    </location>
    <ligand>
        <name>Fe cation</name>
        <dbReference type="ChEBI" id="CHEBI:24875"/>
        <label>1</label>
    </ligand>
</feature>
<feature type="binding site" evidence="1">
    <location>
        <position position="144"/>
    </location>
    <ligand>
        <name>Fe cation</name>
        <dbReference type="ChEBI" id="CHEBI:24875"/>
        <label>1</label>
    </ligand>
</feature>
<feature type="binding site" evidence="1">
    <location>
        <position position="147"/>
    </location>
    <ligand>
        <name>Fe cation</name>
        <dbReference type="ChEBI" id="CHEBI:24875"/>
        <label>1</label>
    </ligand>
</feature>
<feature type="binding site" evidence="1">
    <location>
        <position position="209"/>
    </location>
    <ligand>
        <name>Fe cation</name>
        <dbReference type="ChEBI" id="CHEBI:24875"/>
        <label>2</label>
    </ligand>
</feature>
<feature type="binding site" evidence="1">
    <location>
        <position position="243"/>
    </location>
    <ligand>
        <name>Fe cation</name>
        <dbReference type="ChEBI" id="CHEBI:24875"/>
        <label>2</label>
    </ligand>
</feature>
<feature type="binding site" evidence="1">
    <location>
        <position position="246"/>
    </location>
    <ligand>
        <name>Fe cation</name>
        <dbReference type="ChEBI" id="CHEBI:24875"/>
        <label>2</label>
    </ligand>
</feature>
<feature type="helix" evidence="5">
    <location>
        <begin position="25"/>
        <end position="29"/>
    </location>
</feature>
<feature type="helix" evidence="5">
    <location>
        <begin position="30"/>
        <end position="35"/>
    </location>
</feature>
<feature type="helix" evidence="5">
    <location>
        <begin position="64"/>
        <end position="83"/>
    </location>
</feature>
<feature type="helix" evidence="5">
    <location>
        <begin position="85"/>
        <end position="89"/>
    </location>
</feature>
<feature type="helix" evidence="5">
    <location>
        <begin position="91"/>
        <end position="93"/>
    </location>
</feature>
<feature type="helix" evidence="5">
    <location>
        <begin position="97"/>
        <end position="127"/>
    </location>
</feature>
<feature type="helix" evidence="5">
    <location>
        <begin position="131"/>
        <end position="161"/>
    </location>
</feature>
<feature type="turn" evidence="5">
    <location>
        <begin position="166"/>
        <end position="170"/>
    </location>
</feature>
<feature type="helix" evidence="5">
    <location>
        <begin position="171"/>
        <end position="174"/>
    </location>
</feature>
<feature type="helix" evidence="5">
    <location>
        <begin position="175"/>
        <end position="177"/>
    </location>
</feature>
<feature type="helix" evidence="5">
    <location>
        <begin position="179"/>
        <end position="188"/>
    </location>
</feature>
<feature type="helix" evidence="5">
    <location>
        <begin position="190"/>
        <end position="193"/>
    </location>
</feature>
<feature type="helix" evidence="5">
    <location>
        <begin position="197"/>
        <end position="204"/>
    </location>
</feature>
<feature type="turn" evidence="5">
    <location>
        <begin position="205"/>
        <end position="207"/>
    </location>
</feature>
<feature type="helix" evidence="5">
    <location>
        <begin position="208"/>
        <end position="211"/>
    </location>
</feature>
<feature type="helix" evidence="5">
    <location>
        <begin position="213"/>
        <end position="226"/>
    </location>
</feature>
<feature type="helix" evidence="5">
    <location>
        <begin position="231"/>
        <end position="240"/>
    </location>
</feature>
<feature type="helix" evidence="5">
    <location>
        <begin position="243"/>
        <end position="257"/>
    </location>
</feature>
<feature type="helix" evidence="5">
    <location>
        <begin position="261"/>
        <end position="292"/>
    </location>
</feature>
<feature type="helix" evidence="5">
    <location>
        <begin position="301"/>
        <end position="309"/>
    </location>
</feature>
<feature type="helix" evidence="5">
    <location>
        <begin position="310"/>
        <end position="315"/>
    </location>
</feature>
<feature type="helix" evidence="5">
    <location>
        <begin position="316"/>
        <end position="319"/>
    </location>
</feature>
<feature type="helix" evidence="5">
    <location>
        <begin position="320"/>
        <end position="324"/>
    </location>
</feature>
<feature type="helix" evidence="5">
    <location>
        <begin position="332"/>
        <end position="338"/>
    </location>
</feature>
<feature type="turn" evidence="5">
    <location>
        <begin position="339"/>
        <end position="341"/>
    </location>
</feature>
<feature type="helix" evidence="5">
    <location>
        <begin position="342"/>
        <end position="352"/>
    </location>
</feature>
<feature type="helix" evidence="5">
    <location>
        <begin position="354"/>
        <end position="356"/>
    </location>
</feature>
<feature type="strand" evidence="5">
    <location>
        <begin position="357"/>
        <end position="360"/>
    </location>
</feature>
<feature type="helix" evidence="5">
    <location>
        <begin position="366"/>
        <end position="375"/>
    </location>
</feature>
<feature type="turn" evidence="5">
    <location>
        <begin position="377"/>
        <end position="382"/>
    </location>
</feature>
<feature type="helix" evidence="5">
    <location>
        <begin position="383"/>
        <end position="392"/>
    </location>
</feature>
<feature type="turn" evidence="5">
    <location>
        <begin position="393"/>
        <end position="396"/>
    </location>
</feature>
<feature type="helix" evidence="6">
    <location>
        <begin position="398"/>
        <end position="400"/>
    </location>
</feature>
<feature type="helix" evidence="5">
    <location>
        <begin position="404"/>
        <end position="410"/>
    </location>
</feature>
<feature type="turn" evidence="5">
    <location>
        <begin position="419"/>
        <end position="421"/>
    </location>
</feature>
<feature type="turn" evidence="5">
    <location>
        <begin position="427"/>
        <end position="429"/>
    </location>
</feature>
<feature type="strand" evidence="5">
    <location>
        <begin position="437"/>
        <end position="441"/>
    </location>
</feature>
<feature type="strand" evidence="5">
    <location>
        <begin position="444"/>
        <end position="448"/>
    </location>
</feature>
<feature type="helix" evidence="5">
    <location>
        <begin position="451"/>
        <end position="459"/>
    </location>
</feature>
<feature type="helix" evidence="5">
    <location>
        <begin position="461"/>
        <end position="463"/>
    </location>
</feature>
<feature type="helix" evidence="5">
    <location>
        <begin position="469"/>
        <end position="473"/>
    </location>
</feature>
<feature type="helix" evidence="5">
    <location>
        <begin position="478"/>
        <end position="484"/>
    </location>
</feature>
<feature type="strand" evidence="5">
    <location>
        <begin position="492"/>
        <end position="496"/>
    </location>
</feature>
<feature type="strand" evidence="5">
    <location>
        <begin position="498"/>
        <end position="500"/>
    </location>
</feature>
<feature type="strand" evidence="5">
    <location>
        <begin position="503"/>
        <end position="505"/>
    </location>
</feature>
<feature type="helix" evidence="5">
    <location>
        <begin position="509"/>
        <end position="515"/>
    </location>
</feature>
<feature type="turn" evidence="5">
    <location>
        <begin position="522"/>
        <end position="525"/>
    </location>
</feature>
<sequence>MAISLATKAATDALKVNRAPVGVEPQEVHKWLQSFNWDFKENRTKYPTKYHMANETKEQFKVIAKEYARMEAAKDERQFGTLLDGLTRLGAGNKVHPRWGETMKVISNFLEVGEYNAIAASAMLWDSATAAEQKNGYLAQVLDEIRHTHQCAFINHYYSKHYHDPAGHNDARRTRAIGPLWKGMKRVFADGFISGDAVECSVNLQLVGEACFTNPLIVAVTEWASANGDEITPTVFLSVETDELRHMANGYQTVVSIANDPASAKFLNTDLNNAFWTQQKYFTPVLGYLFEYGSKFKVEPWVKTWNRWVYEDWGGIWIGRLGKYGVESPASLRDAKRDAYWAHHDLALAAYAMWPLGFARLALPDEEDQAWFEANYPGWADHYGKIFNEWKKLGYEDPKSGFIPYQWLLANGHDVYIDRVSQVPFIPSLAKGTGSLRVHEFNGKKHSLTDDWGERQWLIEPERYECHNVFEQYEGRELSEVIAEGHGVRSDGKTLIAQPHTRGDNLWTLEDIKRAGCVFPDPLAKF</sequence>
<organism>
    <name type="scientific">Methylosinus trichosporium</name>
    <dbReference type="NCBI Taxonomy" id="426"/>
    <lineage>
        <taxon>Bacteria</taxon>
        <taxon>Pseudomonadati</taxon>
        <taxon>Pseudomonadota</taxon>
        <taxon>Alphaproteobacteria</taxon>
        <taxon>Hyphomicrobiales</taxon>
        <taxon>Methylocystaceae</taxon>
        <taxon>Methylosinus</taxon>
    </lineage>
</organism>
<dbReference type="EC" id="1.14.13.25"/>
<dbReference type="EMBL" id="X55394">
    <property type="protein sequence ID" value="CAA39068.2"/>
    <property type="molecule type" value="Genomic_DNA"/>
</dbReference>
<dbReference type="PIR" id="S15207">
    <property type="entry name" value="S15207"/>
</dbReference>
<dbReference type="PDB" id="1MHY">
    <property type="method" value="X-ray"/>
    <property type="resolution" value="2.00 A"/>
    <property type="chains" value="D=1-526"/>
</dbReference>
<dbReference type="PDB" id="1MHZ">
    <property type="method" value="X-ray"/>
    <property type="resolution" value="2.70 A"/>
    <property type="chains" value="D=1-526"/>
</dbReference>
<dbReference type="PDB" id="6VK4">
    <property type="method" value="X-ray"/>
    <property type="resolution" value="2.35 A"/>
    <property type="chains" value="A/E=1-526"/>
</dbReference>
<dbReference type="PDB" id="6VK5">
    <property type="method" value="X-ray"/>
    <property type="resolution" value="1.86 A"/>
    <property type="chains" value="A/E=1-526"/>
</dbReference>
<dbReference type="PDB" id="6VK6">
    <property type="method" value="X-ray"/>
    <property type="resolution" value="1.52 A"/>
    <property type="chains" value="A=1-526"/>
</dbReference>
<dbReference type="PDB" id="6VK7">
    <property type="method" value="X-ray"/>
    <property type="resolution" value="2.12 A"/>
    <property type="chains" value="A=1-526"/>
</dbReference>
<dbReference type="PDB" id="6VK8">
    <property type="method" value="X-ray"/>
    <property type="resolution" value="2.03 A"/>
    <property type="chains" value="A/E=1-526"/>
</dbReference>
<dbReference type="PDB" id="6YD0">
    <property type="method" value="X-ray"/>
    <property type="resolution" value="1.95 A"/>
    <property type="chains" value="D=1-526"/>
</dbReference>
<dbReference type="PDB" id="6YDI">
    <property type="method" value="X-ray"/>
    <property type="resolution" value="1.95 A"/>
    <property type="chains" value="D=1-526"/>
</dbReference>
<dbReference type="PDB" id="6YDU">
    <property type="method" value="X-ray"/>
    <property type="resolution" value="1.95 A"/>
    <property type="chains" value="D=1-526"/>
</dbReference>
<dbReference type="PDB" id="6YY3">
    <property type="method" value="X-ray"/>
    <property type="resolution" value="2.00 A"/>
    <property type="chains" value="D=1-526"/>
</dbReference>
<dbReference type="PDB" id="7M8Q">
    <property type="method" value="X-ray"/>
    <property type="resolution" value="2.08 A"/>
    <property type="chains" value="A/E=12-526"/>
</dbReference>
<dbReference type="PDB" id="7M8R">
    <property type="method" value="X-ray"/>
    <property type="resolution" value="2.22 A"/>
    <property type="chains" value="A/E=12-526"/>
</dbReference>
<dbReference type="PDB" id="7S6Q">
    <property type="method" value="X-ray"/>
    <property type="resolution" value="1.96 A"/>
    <property type="chains" value="A/E=12-526"/>
</dbReference>
<dbReference type="PDB" id="7S6R">
    <property type="method" value="X-ray"/>
    <property type="resolution" value="1.89 A"/>
    <property type="chains" value="A/E=12-526"/>
</dbReference>
<dbReference type="PDB" id="7S6T">
    <property type="method" value="X-ray"/>
    <property type="resolution" value="1.82 A"/>
    <property type="chains" value="A/E=12-526"/>
</dbReference>
<dbReference type="PDB" id="7S7H">
    <property type="method" value="X-ray"/>
    <property type="resolution" value="2.40 A"/>
    <property type="chains" value="A/E=12-526"/>
</dbReference>
<dbReference type="PDBsum" id="1MHY"/>
<dbReference type="PDBsum" id="1MHZ"/>
<dbReference type="PDBsum" id="6VK4"/>
<dbReference type="PDBsum" id="6VK5"/>
<dbReference type="PDBsum" id="6VK6"/>
<dbReference type="PDBsum" id="6VK7"/>
<dbReference type="PDBsum" id="6VK8"/>
<dbReference type="PDBsum" id="6YD0"/>
<dbReference type="PDBsum" id="6YDI"/>
<dbReference type="PDBsum" id="6YDU"/>
<dbReference type="PDBsum" id="6YY3"/>
<dbReference type="PDBsum" id="7M8Q"/>
<dbReference type="PDBsum" id="7M8R"/>
<dbReference type="PDBsum" id="7S6Q"/>
<dbReference type="PDBsum" id="7S6R"/>
<dbReference type="PDBsum" id="7S6T"/>
<dbReference type="PDBsum" id="7S7H"/>
<dbReference type="SMR" id="P27353"/>
<dbReference type="BRENDA" id="1.14.13.25">
    <property type="organism ID" value="3322"/>
</dbReference>
<dbReference type="EvolutionaryTrace" id="P27353"/>
<dbReference type="GO" id="GO:0046872">
    <property type="term" value="F:metal ion binding"/>
    <property type="evidence" value="ECO:0007669"/>
    <property type="project" value="UniProtKB-KW"/>
</dbReference>
<dbReference type="GO" id="GO:0015049">
    <property type="term" value="F:methane monooxygenase [NAD(P)H] activity"/>
    <property type="evidence" value="ECO:0007669"/>
    <property type="project" value="UniProtKB-EC"/>
</dbReference>
<dbReference type="GO" id="GO:0006730">
    <property type="term" value="P:one-carbon metabolic process"/>
    <property type="evidence" value="ECO:0007669"/>
    <property type="project" value="UniProtKB-KW"/>
</dbReference>
<dbReference type="CDD" id="cd01057">
    <property type="entry name" value="AAMH_A"/>
    <property type="match status" value="1"/>
</dbReference>
<dbReference type="Gene3D" id="1.10.620.20">
    <property type="entry name" value="Ribonucleotide Reductase, subunit A"/>
    <property type="match status" value="1"/>
</dbReference>
<dbReference type="InterPro" id="IPR009078">
    <property type="entry name" value="Ferritin-like_SF"/>
</dbReference>
<dbReference type="InterPro" id="IPR003430">
    <property type="entry name" value="Phenol_Hydrox"/>
</dbReference>
<dbReference type="InterPro" id="IPR012348">
    <property type="entry name" value="RNR-like"/>
</dbReference>
<dbReference type="Pfam" id="PF02332">
    <property type="entry name" value="Phenol_Hydrox"/>
    <property type="match status" value="1"/>
</dbReference>
<dbReference type="SUPFAM" id="SSF47240">
    <property type="entry name" value="Ferritin-like"/>
    <property type="match status" value="1"/>
</dbReference>
<evidence type="ECO:0000250" key="1"/>
<evidence type="ECO:0000255" key="2"/>
<evidence type="ECO:0000269" key="3">
    <source>
    </source>
</evidence>
<evidence type="ECO:0000305" key="4"/>
<evidence type="ECO:0007829" key="5">
    <source>
        <dbReference type="PDB" id="6VK6"/>
    </source>
</evidence>
<evidence type="ECO:0007829" key="6">
    <source>
        <dbReference type="PDB" id="6YD0"/>
    </source>
</evidence>